<keyword id="KW-1185">Reference proteome</keyword>
<feature type="chain" id="PRO_0000248935" description="Uncharacterized protein YlbG">
    <location>
        <begin position="1"/>
        <end position="123"/>
    </location>
</feature>
<dbReference type="EMBL" id="AE005174">
    <property type="protein sequence ID" value="AAG54858.1"/>
    <property type="status" value="ALT_INIT"/>
    <property type="molecule type" value="Genomic_DNA"/>
</dbReference>
<dbReference type="EMBL" id="BA000007">
    <property type="protein sequence ID" value="BAB33986.1"/>
    <property type="status" value="ALT_INIT"/>
    <property type="molecule type" value="Genomic_DNA"/>
</dbReference>
<dbReference type="RefSeq" id="NP_308590.2">
    <property type="nucleotide sequence ID" value="NC_002695.1"/>
</dbReference>
<dbReference type="SMR" id="Q7DC27"/>
<dbReference type="STRING" id="155864.Z0656"/>
<dbReference type="GeneID" id="915360"/>
<dbReference type="KEGG" id="ece:Z0656"/>
<dbReference type="KEGG" id="ecs:ECs_0563"/>
<dbReference type="PATRIC" id="fig|386585.9.peg.671"/>
<dbReference type="eggNOG" id="COG2801">
    <property type="taxonomic scope" value="Bacteria"/>
</dbReference>
<dbReference type="HOGENOM" id="CLU_067821_0_1_6"/>
<dbReference type="Proteomes" id="UP000000558">
    <property type="component" value="Chromosome"/>
</dbReference>
<dbReference type="Proteomes" id="UP000002519">
    <property type="component" value="Chromosome"/>
</dbReference>
<dbReference type="InterPro" id="IPR009057">
    <property type="entry name" value="Homeodomain-like_sf"/>
</dbReference>
<dbReference type="Pfam" id="PF13551">
    <property type="entry name" value="HTH_29"/>
    <property type="match status" value="1"/>
</dbReference>
<dbReference type="SUPFAM" id="SSF46689">
    <property type="entry name" value="Homeodomain-like"/>
    <property type="match status" value="1"/>
</dbReference>
<sequence>MLHTANPVIKHKAGLLNLAEELSNVSKACKIMGVSRDTFYRYRELVAEGGVDAQINRSRRAPNLKNRTDEATEQAVVDYAVAFPTHGQHRASNELRKQGVFISDSGVRSVWLLHNLENLKRRY</sequence>
<name>YLBG_ECO57</name>
<gene>
    <name type="primary">ylbG</name>
    <name type="ordered locus">Z0656</name>
    <name type="ordered locus">ECs0563</name>
</gene>
<accession>Q7DC27</accession>
<accession>Q7AGV8</accession>
<comment type="sequence caution" evidence="1">
    <conflict type="erroneous initiation">
        <sequence resource="EMBL-CDS" id="AAG54858"/>
    </conflict>
</comment>
<comment type="sequence caution" evidence="1">
    <conflict type="erroneous initiation">
        <sequence resource="EMBL-CDS" id="BAB33986"/>
    </conflict>
</comment>
<reference key="1">
    <citation type="journal article" date="2001" name="Nature">
        <title>Genome sequence of enterohaemorrhagic Escherichia coli O157:H7.</title>
        <authorList>
            <person name="Perna N.T."/>
            <person name="Plunkett G. III"/>
            <person name="Burland V."/>
            <person name="Mau B."/>
            <person name="Glasner J.D."/>
            <person name="Rose D.J."/>
            <person name="Mayhew G.F."/>
            <person name="Evans P.S."/>
            <person name="Gregor J."/>
            <person name="Kirkpatrick H.A."/>
            <person name="Posfai G."/>
            <person name="Hackett J."/>
            <person name="Klink S."/>
            <person name="Boutin A."/>
            <person name="Shao Y."/>
            <person name="Miller L."/>
            <person name="Grotbeck E.J."/>
            <person name="Davis N.W."/>
            <person name="Lim A."/>
            <person name="Dimalanta E.T."/>
            <person name="Potamousis K."/>
            <person name="Apodaca J."/>
            <person name="Anantharaman T.S."/>
            <person name="Lin J."/>
            <person name="Yen G."/>
            <person name="Schwartz D.C."/>
            <person name="Welch R.A."/>
            <person name="Blattner F.R."/>
        </authorList>
    </citation>
    <scope>NUCLEOTIDE SEQUENCE [LARGE SCALE GENOMIC DNA]</scope>
    <source>
        <strain>O157:H7 / EDL933 / ATCC 700927 / EHEC</strain>
    </source>
</reference>
<reference key="2">
    <citation type="journal article" date="2001" name="DNA Res.">
        <title>Complete genome sequence of enterohemorrhagic Escherichia coli O157:H7 and genomic comparison with a laboratory strain K-12.</title>
        <authorList>
            <person name="Hayashi T."/>
            <person name="Makino K."/>
            <person name="Ohnishi M."/>
            <person name="Kurokawa K."/>
            <person name="Ishii K."/>
            <person name="Yokoyama K."/>
            <person name="Han C.-G."/>
            <person name="Ohtsubo E."/>
            <person name="Nakayama K."/>
            <person name="Murata T."/>
            <person name="Tanaka M."/>
            <person name="Tobe T."/>
            <person name="Iida T."/>
            <person name="Takami H."/>
            <person name="Honda T."/>
            <person name="Sasakawa C."/>
            <person name="Ogasawara N."/>
            <person name="Yasunaga T."/>
            <person name="Kuhara S."/>
            <person name="Shiba T."/>
            <person name="Hattori M."/>
            <person name="Shinagawa H."/>
        </authorList>
    </citation>
    <scope>NUCLEOTIDE SEQUENCE [LARGE SCALE GENOMIC DNA]</scope>
    <source>
        <strain>O157:H7 / Sakai / RIMD 0509952 / EHEC</strain>
    </source>
</reference>
<organism>
    <name type="scientific">Escherichia coli O157:H7</name>
    <dbReference type="NCBI Taxonomy" id="83334"/>
    <lineage>
        <taxon>Bacteria</taxon>
        <taxon>Pseudomonadati</taxon>
        <taxon>Pseudomonadota</taxon>
        <taxon>Gammaproteobacteria</taxon>
        <taxon>Enterobacterales</taxon>
        <taxon>Enterobacteriaceae</taxon>
        <taxon>Escherichia</taxon>
    </lineage>
</organism>
<protein>
    <recommendedName>
        <fullName>Uncharacterized protein YlbG</fullName>
    </recommendedName>
</protein>
<proteinExistence type="predicted"/>
<evidence type="ECO:0000305" key="1"/>